<accession>P0C1D4</accession>
<accession>A8J9I7</accession>
<organism>
    <name type="scientific">Chlamydomonas reinhardtii</name>
    <name type="common">Chlamydomonas smithii</name>
    <dbReference type="NCBI Taxonomy" id="3055"/>
    <lineage>
        <taxon>Eukaryota</taxon>
        <taxon>Viridiplantae</taxon>
        <taxon>Chlorophyta</taxon>
        <taxon>core chlorophytes</taxon>
        <taxon>Chlorophyceae</taxon>
        <taxon>CS clade</taxon>
        <taxon>Chlamydomonadales</taxon>
        <taxon>Chlamydomonadaceae</taxon>
        <taxon>Chlamydomonas</taxon>
    </lineage>
</organism>
<proteinExistence type="evidence at protein level"/>
<protein>
    <recommendedName>
        <fullName>Cytochrome b6-f complex subunit 8, chloroplastic</fullName>
    </recommendedName>
    <alternativeName>
        <fullName>Cytochrome b6-f complex subunit PetN</fullName>
    </alternativeName>
    <alternativeName>
        <fullName>Cytochrome b6-f complex subunit VIII</fullName>
    </alternativeName>
</protein>
<keyword id="KW-0002">3D-structure</keyword>
<keyword id="KW-0150">Chloroplast</keyword>
<keyword id="KW-0249">Electron transport</keyword>
<keyword id="KW-0472">Membrane</keyword>
<keyword id="KW-0602">Photosynthesis</keyword>
<keyword id="KW-0934">Plastid</keyword>
<keyword id="KW-0793">Thylakoid</keyword>
<keyword id="KW-0812">Transmembrane</keyword>
<keyword id="KW-1133">Transmembrane helix</keyword>
<keyword id="KW-0813">Transport</keyword>
<name>PETN_CHLRE</name>
<comment type="function">
    <text>Component of the cytochrome b6-f complex, which mediates electron transfer between photosystem II (PSII) and photosystem I (PSI), cyclic electron flow around PSI, and state transitions.</text>
</comment>
<comment type="subunit">
    <text>The 4 large subunits of the cytochrome b6-f complex are cytochrome b6, subunit IV (17 kDa polypeptide, PetD), cytochrome f and the Rieske protein, while the 4 small subunits are PetG, PetL, PetM and PetN. The complex functions as a dimer.</text>
</comment>
<comment type="subcellular location">
    <subcellularLocation>
        <location>Plastid</location>
        <location>Chloroplast thylakoid membrane</location>
        <topology>Single-pass membrane protein</topology>
    </subcellularLocation>
</comment>
<comment type="miscellaneous">
    <text>Unlike its orthologs this protein is not encoded in the chloroplast.</text>
</comment>
<comment type="similarity">
    <text evidence="2">Belongs to the PetN family.</text>
</comment>
<comment type="sequence caution" evidence="2">
    <conflict type="erroneous gene model prediction">
        <sequence resource="EMBL-CDS" id="EDO99536"/>
    </conflict>
</comment>
<reference key="1">
    <citation type="journal article" date="2007" name="Science">
        <title>The Chlamydomonas genome reveals the evolution of key animal and plant functions.</title>
        <authorList>
            <person name="Merchant S.S."/>
            <person name="Prochnik S.E."/>
            <person name="Vallon O."/>
            <person name="Harris E.H."/>
            <person name="Karpowicz S.J."/>
            <person name="Witman G.B."/>
            <person name="Terry A."/>
            <person name="Salamov A."/>
            <person name="Fritz-Laylin L.K."/>
            <person name="Marechal-Drouard L."/>
            <person name="Marshall W.F."/>
            <person name="Qu L.H."/>
            <person name="Nelson D.R."/>
            <person name="Sanderfoot A.A."/>
            <person name="Spalding M.H."/>
            <person name="Kapitonov V.V."/>
            <person name="Ren Q."/>
            <person name="Ferris P."/>
            <person name="Lindquist E."/>
            <person name="Shapiro H."/>
            <person name="Lucas S.M."/>
            <person name="Grimwood J."/>
            <person name="Schmutz J."/>
            <person name="Cardol P."/>
            <person name="Cerutti H."/>
            <person name="Chanfreau G."/>
            <person name="Chen C.L."/>
            <person name="Cognat V."/>
            <person name="Croft M.T."/>
            <person name="Dent R."/>
            <person name="Dutcher S."/>
            <person name="Fernandez E."/>
            <person name="Fukuzawa H."/>
            <person name="Gonzalez-Ballester D."/>
            <person name="Gonzalez-Halphen D."/>
            <person name="Hallmann A."/>
            <person name="Hanikenne M."/>
            <person name="Hippler M."/>
            <person name="Inwood W."/>
            <person name="Jabbari K."/>
            <person name="Kalanon M."/>
            <person name="Kuras R."/>
            <person name="Lefebvre P.A."/>
            <person name="Lemaire S.D."/>
            <person name="Lobanov A.V."/>
            <person name="Lohr M."/>
            <person name="Manuell A."/>
            <person name="Meier I."/>
            <person name="Mets L."/>
            <person name="Mittag M."/>
            <person name="Mittelmeier T."/>
            <person name="Moroney J.V."/>
            <person name="Moseley J."/>
            <person name="Napoli C."/>
            <person name="Nedelcu A.M."/>
            <person name="Niyogi K."/>
            <person name="Novoselov S.V."/>
            <person name="Paulsen I.T."/>
            <person name="Pazour G.J."/>
            <person name="Purton S."/>
            <person name="Ral J.P."/>
            <person name="Riano-Pachon D.M."/>
            <person name="Riekhof W."/>
            <person name="Rymarquis L."/>
            <person name="Schroda M."/>
            <person name="Stern D."/>
            <person name="Umen J."/>
            <person name="Willows R."/>
            <person name="Wilson N."/>
            <person name="Zimmer S.L."/>
            <person name="Allmer J."/>
            <person name="Balk J."/>
            <person name="Bisova K."/>
            <person name="Chen C.J."/>
            <person name="Elias M."/>
            <person name="Gendler K."/>
            <person name="Hauser C."/>
            <person name="Lamb M.R."/>
            <person name="Ledford H."/>
            <person name="Long J.C."/>
            <person name="Minagawa J."/>
            <person name="Page M.D."/>
            <person name="Pan J."/>
            <person name="Pootakham W."/>
            <person name="Roje S."/>
            <person name="Rose A."/>
            <person name="Stahlberg E."/>
            <person name="Terauchi A.M."/>
            <person name="Yang P."/>
            <person name="Ball S."/>
            <person name="Bowler C."/>
            <person name="Dieckmann C.L."/>
            <person name="Gladyshev V.N."/>
            <person name="Green P."/>
            <person name="Jorgensen R."/>
            <person name="Mayfield S."/>
            <person name="Mueller-Roeber B."/>
            <person name="Rajamani S."/>
            <person name="Sayre R.T."/>
            <person name="Brokstein P."/>
            <person name="Dubchak I."/>
            <person name="Goodstein D."/>
            <person name="Hornick L."/>
            <person name="Huang Y.W."/>
            <person name="Jhaveri J."/>
            <person name="Luo Y."/>
            <person name="Martinez D."/>
            <person name="Ngau W.C."/>
            <person name="Otillar B."/>
            <person name="Poliakov A."/>
            <person name="Porter A."/>
            <person name="Szajkowski L."/>
            <person name="Werner G."/>
            <person name="Zhou K."/>
            <person name="Grigoriev I.V."/>
            <person name="Rokhsar D.S."/>
            <person name="Grossman A.R."/>
        </authorList>
    </citation>
    <scope>NUCLEOTIDE SEQUENCE [LARGE SCALE GENOMIC DNA]</scope>
    <source>
        <strain>CC-503</strain>
    </source>
</reference>
<reference key="2">
    <citation type="journal article" date="1999" name="DNA Res.">
        <title>A large scale structural analysis of cDNAs in a unicellular green alga, Chlamydomonas reinhardtii. I. Generation of 3433 non-redundant expressed sequence tags.</title>
        <authorList>
            <person name="Asamizu E."/>
            <person name="Nakamura Y."/>
            <person name="Sato S."/>
            <person name="Fukuzawa H."/>
            <person name="Tabata S."/>
        </authorList>
    </citation>
    <scope>NUCLEOTIDE SEQUENCE [MRNA] OF 2-35</scope>
</reference>
<reference key="3">
    <citation type="journal article" date="2003" name="Nature">
        <title>An atypical haem in the cytochrome b(6)f complex.</title>
        <authorList>
            <person name="Stroebel D."/>
            <person name="Choquet Y."/>
            <person name="Popot J.-L."/>
            <person name="Picot D."/>
        </authorList>
    </citation>
    <scope>X-RAY CRYSTALLOGRAPHY (3.1 ANGSTROMS) OF 5-35</scope>
</reference>
<evidence type="ECO:0000255" key="1"/>
<evidence type="ECO:0000305" key="2"/>
<evidence type="ECO:0007829" key="3">
    <source>
        <dbReference type="PDB" id="1Q90"/>
    </source>
</evidence>
<sequence length="35" mass="3727">MLAEGEPAIVQIGWAATCVMFSFSLSLVVWGRSGL</sequence>
<dbReference type="EMBL" id="DS496146">
    <property type="protein sequence ID" value="EDO99536.1"/>
    <property type="status" value="ALT_SEQ"/>
    <property type="molecule type" value="Genomic_DNA"/>
</dbReference>
<dbReference type="EMBL" id="AV388719">
    <property type="status" value="NOT_ANNOTATED_CDS"/>
    <property type="molecule type" value="mRNA"/>
</dbReference>
<dbReference type="PDB" id="1Q90">
    <property type="method" value="X-ray"/>
    <property type="resolution" value="3.10 A"/>
    <property type="chains" value="N=5-35"/>
</dbReference>
<dbReference type="PDBsum" id="1Q90"/>
<dbReference type="SMR" id="P0C1D4"/>
<dbReference type="IntAct" id="P0C1D4">
    <property type="interactions" value="1"/>
</dbReference>
<dbReference type="PaxDb" id="3055-EDO99536"/>
<dbReference type="KEGG" id="cre:CHLRE_16g650100v5"/>
<dbReference type="eggNOG" id="ENOG502SX6V">
    <property type="taxonomic scope" value="Eukaryota"/>
</dbReference>
<dbReference type="HOGENOM" id="CLU_2213418_0_0_1"/>
<dbReference type="BioCyc" id="CHLAMY:CHLREDRAFT_177155-MONOMER"/>
<dbReference type="BioCyc" id="MetaCyc:CHLREDRAFT_177155-MONOMER"/>
<dbReference type="EvolutionaryTrace" id="P0C1D4"/>
<dbReference type="GO" id="GO:0009535">
    <property type="term" value="C:chloroplast thylakoid membrane"/>
    <property type="evidence" value="ECO:0007669"/>
    <property type="project" value="UniProtKB-SubCell"/>
</dbReference>
<dbReference type="GO" id="GO:0009512">
    <property type="term" value="C:cytochrome b6f complex"/>
    <property type="evidence" value="ECO:0007669"/>
    <property type="project" value="InterPro"/>
</dbReference>
<dbReference type="GO" id="GO:0045158">
    <property type="term" value="F:electron transporter, transferring electrons within cytochrome b6/f complex of photosystem II activity"/>
    <property type="evidence" value="ECO:0007669"/>
    <property type="project" value="InterPro"/>
</dbReference>
<dbReference type="GO" id="GO:0017004">
    <property type="term" value="P:cytochrome complex assembly"/>
    <property type="evidence" value="ECO:0007669"/>
    <property type="project" value="InterPro"/>
</dbReference>
<dbReference type="GO" id="GO:0015979">
    <property type="term" value="P:photosynthesis"/>
    <property type="evidence" value="ECO:0007669"/>
    <property type="project" value="UniProtKB-KW"/>
</dbReference>
<dbReference type="HAMAP" id="MF_00395">
    <property type="entry name" value="Cytb6_f_PetN"/>
    <property type="match status" value="1"/>
</dbReference>
<dbReference type="InterPro" id="IPR036143">
    <property type="entry name" value="Cytochr_b6-f_cplx_su8_sf"/>
</dbReference>
<dbReference type="InterPro" id="IPR005497">
    <property type="entry name" value="Cytochrome_b6-f_cplx_su8"/>
</dbReference>
<dbReference type="Pfam" id="PF03742">
    <property type="entry name" value="PetN"/>
    <property type="match status" value="1"/>
</dbReference>
<dbReference type="SUPFAM" id="SSF103451">
    <property type="entry name" value="PetN subunit of the cytochrome b6f complex"/>
    <property type="match status" value="1"/>
</dbReference>
<gene>
    <name type="primary">PETN</name>
    <name type="ORF">CHLREDRAFT_177155</name>
</gene>
<feature type="chain" id="PRO_0000415884" description="Cytochrome b6-f complex subunit 8, chloroplastic">
    <location>
        <begin position="1"/>
        <end position="35"/>
    </location>
</feature>
<feature type="transmembrane region" description="Helical" evidence="1">
    <location>
        <begin position="10"/>
        <end position="32"/>
    </location>
</feature>
<feature type="helix" evidence="3">
    <location>
        <begin position="8"/>
        <end position="32"/>
    </location>
</feature>